<evidence type="ECO:0000255" key="1">
    <source>
        <dbReference type="HAMAP-Rule" id="MF_01358"/>
    </source>
</evidence>
<organism>
    <name type="scientific">Mesorhizobium japonicum (strain LMG 29417 / CECT 9101 / MAFF 303099)</name>
    <name type="common">Mesorhizobium loti (strain MAFF 303099)</name>
    <dbReference type="NCBI Taxonomy" id="266835"/>
    <lineage>
        <taxon>Bacteria</taxon>
        <taxon>Pseudomonadati</taxon>
        <taxon>Pseudomonadota</taxon>
        <taxon>Alphaproteobacteria</taxon>
        <taxon>Hyphomicrobiales</taxon>
        <taxon>Phyllobacteriaceae</taxon>
        <taxon>Mesorhizobium</taxon>
    </lineage>
</organism>
<proteinExistence type="inferred from homology"/>
<feature type="chain" id="PRO_0000357897" description="NADH-quinone oxidoreductase subunit D">
    <location>
        <begin position="1"/>
        <end position="396"/>
    </location>
</feature>
<name>NUOD_RHILO</name>
<accession>Q98KQ8</accession>
<comment type="function">
    <text evidence="1">NDH-1 shuttles electrons from NADH, via FMN and iron-sulfur (Fe-S) centers, to quinones in the respiratory chain. The immediate electron acceptor for the enzyme in this species is believed to be ubiquinone. Couples the redox reaction to proton translocation (for every two electrons transferred, four hydrogen ions are translocated across the cytoplasmic membrane), and thus conserves the redox energy in a proton gradient.</text>
</comment>
<comment type="catalytic activity">
    <reaction evidence="1">
        <text>a quinone + NADH + 5 H(+)(in) = a quinol + NAD(+) + 4 H(+)(out)</text>
        <dbReference type="Rhea" id="RHEA:57888"/>
        <dbReference type="ChEBI" id="CHEBI:15378"/>
        <dbReference type="ChEBI" id="CHEBI:24646"/>
        <dbReference type="ChEBI" id="CHEBI:57540"/>
        <dbReference type="ChEBI" id="CHEBI:57945"/>
        <dbReference type="ChEBI" id="CHEBI:132124"/>
    </reaction>
</comment>
<comment type="subunit">
    <text evidence="1">NDH-1 is composed of 14 different subunits. Subunits NuoB, C, D, E, F, and G constitute the peripheral sector of the complex.</text>
</comment>
<comment type="subcellular location">
    <subcellularLocation>
        <location evidence="1">Cell inner membrane</location>
        <topology evidence="1">Peripheral membrane protein</topology>
        <orientation evidence="1">Cytoplasmic side</orientation>
    </subcellularLocation>
</comment>
<comment type="similarity">
    <text evidence="1">Belongs to the complex I 49 kDa subunit family.</text>
</comment>
<protein>
    <recommendedName>
        <fullName evidence="1">NADH-quinone oxidoreductase subunit D</fullName>
        <ecNumber evidence="1">7.1.1.-</ecNumber>
    </recommendedName>
    <alternativeName>
        <fullName evidence="1">NADH dehydrogenase I subunit D</fullName>
    </alternativeName>
    <alternativeName>
        <fullName evidence="1">NDH-1 subunit D</fullName>
    </alternativeName>
</protein>
<reference key="1">
    <citation type="journal article" date="2000" name="DNA Res.">
        <title>Complete genome structure of the nitrogen-fixing symbiotic bacterium Mesorhizobium loti.</title>
        <authorList>
            <person name="Kaneko T."/>
            <person name="Nakamura Y."/>
            <person name="Sato S."/>
            <person name="Asamizu E."/>
            <person name="Kato T."/>
            <person name="Sasamoto S."/>
            <person name="Watanabe A."/>
            <person name="Idesawa K."/>
            <person name="Ishikawa A."/>
            <person name="Kawashima K."/>
            <person name="Kimura T."/>
            <person name="Kishida Y."/>
            <person name="Kiyokawa C."/>
            <person name="Kohara M."/>
            <person name="Matsumoto M."/>
            <person name="Matsuno A."/>
            <person name="Mochizuki Y."/>
            <person name="Nakayama S."/>
            <person name="Nakazaki N."/>
            <person name="Shimpo S."/>
            <person name="Sugimoto M."/>
            <person name="Takeuchi C."/>
            <person name="Yamada M."/>
            <person name="Tabata S."/>
        </authorList>
    </citation>
    <scope>NUCLEOTIDE SEQUENCE [LARGE SCALE GENOMIC DNA]</scope>
    <source>
        <strain>LMG 29417 / CECT 9101 / MAFF 303099</strain>
    </source>
</reference>
<gene>
    <name evidence="1" type="primary">nuoD</name>
    <name type="ordered locus">mll1367</name>
</gene>
<keyword id="KW-0997">Cell inner membrane</keyword>
<keyword id="KW-1003">Cell membrane</keyword>
<keyword id="KW-0472">Membrane</keyword>
<keyword id="KW-0520">NAD</keyword>
<keyword id="KW-0874">Quinone</keyword>
<keyword id="KW-1278">Translocase</keyword>
<keyword id="KW-0813">Transport</keyword>
<keyword id="KW-0830">Ubiquinone</keyword>
<dbReference type="EC" id="7.1.1.-" evidence="1"/>
<dbReference type="EMBL" id="BA000012">
    <property type="protein sequence ID" value="BAB48756.1"/>
    <property type="molecule type" value="Genomic_DNA"/>
</dbReference>
<dbReference type="RefSeq" id="WP_010910109.1">
    <property type="nucleotide sequence ID" value="NC_002678.2"/>
</dbReference>
<dbReference type="SMR" id="Q98KQ8"/>
<dbReference type="KEGG" id="mlo:mll1367"/>
<dbReference type="eggNOG" id="COG0649">
    <property type="taxonomic scope" value="Bacteria"/>
</dbReference>
<dbReference type="HOGENOM" id="CLU_015134_1_1_5"/>
<dbReference type="BioCyc" id="MetaCyc:MONOMER-16397"/>
<dbReference type="Proteomes" id="UP000000552">
    <property type="component" value="Chromosome"/>
</dbReference>
<dbReference type="GO" id="GO:0005886">
    <property type="term" value="C:plasma membrane"/>
    <property type="evidence" value="ECO:0007669"/>
    <property type="project" value="UniProtKB-SubCell"/>
</dbReference>
<dbReference type="GO" id="GO:0051287">
    <property type="term" value="F:NAD binding"/>
    <property type="evidence" value="ECO:0007669"/>
    <property type="project" value="InterPro"/>
</dbReference>
<dbReference type="GO" id="GO:0050136">
    <property type="term" value="F:NADH:ubiquinone reductase (non-electrogenic) activity"/>
    <property type="evidence" value="ECO:0007669"/>
    <property type="project" value="UniProtKB-UniRule"/>
</dbReference>
<dbReference type="GO" id="GO:0048038">
    <property type="term" value="F:quinone binding"/>
    <property type="evidence" value="ECO:0007669"/>
    <property type="project" value="UniProtKB-KW"/>
</dbReference>
<dbReference type="FunFam" id="1.10.645.10:FF:000005">
    <property type="entry name" value="NADH-quinone oxidoreductase subunit D"/>
    <property type="match status" value="1"/>
</dbReference>
<dbReference type="Gene3D" id="1.10.645.10">
    <property type="entry name" value="Cytochrome-c3 Hydrogenase, chain B"/>
    <property type="match status" value="1"/>
</dbReference>
<dbReference type="HAMAP" id="MF_01358">
    <property type="entry name" value="NDH1_NuoD"/>
    <property type="match status" value="1"/>
</dbReference>
<dbReference type="InterPro" id="IPR001135">
    <property type="entry name" value="NADH_Q_OxRdtase_suD"/>
</dbReference>
<dbReference type="InterPro" id="IPR014029">
    <property type="entry name" value="NADH_UbQ_OxRdtase_49kDa_CS"/>
</dbReference>
<dbReference type="InterPro" id="IPR022885">
    <property type="entry name" value="NDH1_su_D/H"/>
</dbReference>
<dbReference type="InterPro" id="IPR029014">
    <property type="entry name" value="NiFe-Hase_large"/>
</dbReference>
<dbReference type="NCBIfam" id="TIGR01962">
    <property type="entry name" value="NuoD"/>
    <property type="match status" value="1"/>
</dbReference>
<dbReference type="NCBIfam" id="NF004739">
    <property type="entry name" value="PRK06075.1"/>
    <property type="match status" value="1"/>
</dbReference>
<dbReference type="PANTHER" id="PTHR11993:SF10">
    <property type="entry name" value="NADH DEHYDROGENASE [UBIQUINONE] IRON-SULFUR PROTEIN 2, MITOCHONDRIAL"/>
    <property type="match status" value="1"/>
</dbReference>
<dbReference type="PANTHER" id="PTHR11993">
    <property type="entry name" value="NADH-UBIQUINONE OXIDOREDUCTASE 49 KDA SUBUNIT"/>
    <property type="match status" value="1"/>
</dbReference>
<dbReference type="Pfam" id="PF00346">
    <property type="entry name" value="Complex1_49kDa"/>
    <property type="match status" value="1"/>
</dbReference>
<dbReference type="SUPFAM" id="SSF56762">
    <property type="entry name" value="HydB/Nqo4-like"/>
    <property type="match status" value="1"/>
</dbReference>
<dbReference type="PROSITE" id="PS00535">
    <property type="entry name" value="COMPLEX1_49K"/>
    <property type="match status" value="1"/>
</dbReference>
<sequence>MAETSVRNFNINFGPQHPAAHGVLRLVLELDGEVVDRVDPHIGLLHRGTEKLIEAKTYLQAVPYLDRLDYCAPMNQEHAFALAAERLLGIEVPKRGQLIRVLYCEIGRIMSHILNVTTQAMDVGALTPPLWGFVEREKLMVFYERASGSRMHAAYFRPGGVHQDLPRQLVEDIGKWIDPFLKSIDDLDRLLTGNRIFKQRNVDIGIVSLADAWAWGFSGVMVRGSGAAWDLRKSQPYECYSEMDFDIPIGKNGDCYDRYLVRMEEMRQSARIMRQCVDLLLGKESTGPVSNLDGKVVPPKRAAMKRSMEALIHHFKLYTEGYRVPAGEVYAAVEAPKGEFGVYLVSDGTNKPYRCKLRAPGFAHLQAMDFLCRGHLLADVTAVLGSLDIVFGEVDR</sequence>